<proteinExistence type="evidence at protein level"/>
<feature type="chain" id="PRO_0000123223" description="Small ribosomal subunit protein uS11">
    <location>
        <begin position="1"/>
        <end position="129"/>
    </location>
</feature>
<accession>P66358</accession>
<accession>Q99S44</accession>
<organism>
    <name type="scientific">Staphylococcus aureus (strain MW2)</name>
    <dbReference type="NCBI Taxonomy" id="196620"/>
    <lineage>
        <taxon>Bacteria</taxon>
        <taxon>Bacillati</taxon>
        <taxon>Bacillota</taxon>
        <taxon>Bacilli</taxon>
        <taxon>Bacillales</taxon>
        <taxon>Staphylococcaceae</taxon>
        <taxon>Staphylococcus</taxon>
    </lineage>
</organism>
<sequence length="129" mass="13882">MARKQVSRKRRVKKNIENGVAHIRSTFNNTIVTITDEFGNALSWSSAGALGFKGSKKSTPFAAQMASETASKSAMEHGLKTVEVTVKGPGPGRESAIRALQSAGLEVTAIRDVTPVPHNGCRPPKRRRV</sequence>
<keyword id="KW-0002">3D-structure</keyword>
<keyword id="KW-0687">Ribonucleoprotein</keyword>
<keyword id="KW-0689">Ribosomal protein</keyword>
<keyword id="KW-0694">RNA-binding</keyword>
<keyword id="KW-0699">rRNA-binding</keyword>
<protein>
    <recommendedName>
        <fullName evidence="1">Small ribosomal subunit protein uS11</fullName>
    </recommendedName>
    <alternativeName>
        <fullName evidence="2">30S ribosomal protein S11</fullName>
    </alternativeName>
</protein>
<evidence type="ECO:0000255" key="1">
    <source>
        <dbReference type="HAMAP-Rule" id="MF_01310"/>
    </source>
</evidence>
<evidence type="ECO:0000305" key="2"/>
<comment type="function">
    <text evidence="1">Located on the platform of the 30S subunit, it bridges several disparate RNA helices of the 16S rRNA. Forms part of the Shine-Dalgarno cleft in the 70S ribosome.</text>
</comment>
<comment type="subunit">
    <text evidence="1">Part of the 30S ribosomal subunit. Interacts with proteins S7 and S18. Binds to IF-3.</text>
</comment>
<comment type="similarity">
    <text evidence="1">Belongs to the universal ribosomal protein uS11 family.</text>
</comment>
<name>RS11_STAAW</name>
<gene>
    <name evidence="1" type="primary">rpsK</name>
    <name type="ordered locus">MW2144</name>
</gene>
<dbReference type="EMBL" id="BA000033">
    <property type="protein sequence ID" value="BAB96009.1"/>
    <property type="molecule type" value="Genomic_DNA"/>
</dbReference>
<dbReference type="RefSeq" id="WP_000101625.1">
    <property type="nucleotide sequence ID" value="NC_003923.1"/>
</dbReference>
<dbReference type="PDB" id="8Y38">
    <property type="method" value="EM"/>
    <property type="resolution" value="2.58 A"/>
    <property type="chains" value="k=1-129"/>
</dbReference>
<dbReference type="PDB" id="8Y39">
    <property type="method" value="EM"/>
    <property type="resolution" value="3.60 A"/>
    <property type="chains" value="k=1-129"/>
</dbReference>
<dbReference type="PDBsum" id="8Y38"/>
<dbReference type="PDBsum" id="8Y39"/>
<dbReference type="EMDB" id="EMD-38875"/>
<dbReference type="EMDB" id="EMD-38876"/>
<dbReference type="SMR" id="P66358"/>
<dbReference type="GeneID" id="98346537"/>
<dbReference type="KEGG" id="sam:MW2144"/>
<dbReference type="HOGENOM" id="CLU_072439_5_0_9"/>
<dbReference type="GO" id="GO:1990904">
    <property type="term" value="C:ribonucleoprotein complex"/>
    <property type="evidence" value="ECO:0007669"/>
    <property type="project" value="UniProtKB-KW"/>
</dbReference>
<dbReference type="GO" id="GO:0005840">
    <property type="term" value="C:ribosome"/>
    <property type="evidence" value="ECO:0007669"/>
    <property type="project" value="UniProtKB-KW"/>
</dbReference>
<dbReference type="GO" id="GO:0019843">
    <property type="term" value="F:rRNA binding"/>
    <property type="evidence" value="ECO:0007669"/>
    <property type="project" value="UniProtKB-UniRule"/>
</dbReference>
<dbReference type="GO" id="GO:0003735">
    <property type="term" value="F:structural constituent of ribosome"/>
    <property type="evidence" value="ECO:0007669"/>
    <property type="project" value="InterPro"/>
</dbReference>
<dbReference type="GO" id="GO:0006412">
    <property type="term" value="P:translation"/>
    <property type="evidence" value="ECO:0007669"/>
    <property type="project" value="UniProtKB-UniRule"/>
</dbReference>
<dbReference type="FunFam" id="3.30.420.80:FF:000001">
    <property type="entry name" value="30S ribosomal protein S11"/>
    <property type="match status" value="1"/>
</dbReference>
<dbReference type="Gene3D" id="3.30.420.80">
    <property type="entry name" value="Ribosomal protein S11"/>
    <property type="match status" value="1"/>
</dbReference>
<dbReference type="HAMAP" id="MF_01310">
    <property type="entry name" value="Ribosomal_uS11"/>
    <property type="match status" value="1"/>
</dbReference>
<dbReference type="InterPro" id="IPR001971">
    <property type="entry name" value="Ribosomal_uS11"/>
</dbReference>
<dbReference type="InterPro" id="IPR019981">
    <property type="entry name" value="Ribosomal_uS11_bac-type"/>
</dbReference>
<dbReference type="InterPro" id="IPR018102">
    <property type="entry name" value="Ribosomal_uS11_CS"/>
</dbReference>
<dbReference type="InterPro" id="IPR036967">
    <property type="entry name" value="Ribosomal_uS11_sf"/>
</dbReference>
<dbReference type="NCBIfam" id="NF003698">
    <property type="entry name" value="PRK05309.1"/>
    <property type="match status" value="1"/>
</dbReference>
<dbReference type="NCBIfam" id="TIGR03632">
    <property type="entry name" value="uS11_bact"/>
    <property type="match status" value="1"/>
</dbReference>
<dbReference type="PANTHER" id="PTHR11759">
    <property type="entry name" value="40S RIBOSOMAL PROTEIN S14/30S RIBOSOMAL PROTEIN S11"/>
    <property type="match status" value="1"/>
</dbReference>
<dbReference type="Pfam" id="PF00411">
    <property type="entry name" value="Ribosomal_S11"/>
    <property type="match status" value="1"/>
</dbReference>
<dbReference type="PIRSF" id="PIRSF002131">
    <property type="entry name" value="Ribosomal_S11"/>
    <property type="match status" value="1"/>
</dbReference>
<dbReference type="SUPFAM" id="SSF53137">
    <property type="entry name" value="Translational machinery components"/>
    <property type="match status" value="1"/>
</dbReference>
<dbReference type="PROSITE" id="PS00054">
    <property type="entry name" value="RIBOSOMAL_S11"/>
    <property type="match status" value="1"/>
</dbReference>
<reference key="1">
    <citation type="journal article" date="2002" name="Lancet">
        <title>Genome and virulence determinants of high virulence community-acquired MRSA.</title>
        <authorList>
            <person name="Baba T."/>
            <person name="Takeuchi F."/>
            <person name="Kuroda M."/>
            <person name="Yuzawa H."/>
            <person name="Aoki K."/>
            <person name="Oguchi A."/>
            <person name="Nagai Y."/>
            <person name="Iwama N."/>
            <person name="Asano K."/>
            <person name="Naimi T."/>
            <person name="Kuroda H."/>
            <person name="Cui L."/>
            <person name="Yamamoto K."/>
            <person name="Hiramatsu K."/>
        </authorList>
    </citation>
    <scope>NUCLEOTIDE SEQUENCE [LARGE SCALE GENOMIC DNA]</scope>
    <source>
        <strain>MW2</strain>
    </source>
</reference>